<sequence>MGQKVNPVGLRLGINRNWTSRWFPSARTAPSNIDEDNKIRKFLKKELYYAGVSQIVIERAAKKLRVTVVAARPGLIIGKKGVDIEKVKEGLKTLIKKEVSINIKEVKRPQADAQLAAENVATQLEKRVAFRRAMKKVMQAALKSGAKGVKVRVSGRLAGAEIARTEWYMEGRVPLHTLRAKIDYGFAEAMTVYGIIGVKVWIFKGEVLQKGIQFEKKEEVKEEREPRRSRRGRQ</sequence>
<evidence type="ECO:0000255" key="1">
    <source>
        <dbReference type="HAMAP-Rule" id="MF_01309"/>
    </source>
</evidence>
<evidence type="ECO:0000305" key="2"/>
<accession>Q17ZD2</accession>
<proteinExistence type="inferred from homology"/>
<gene>
    <name evidence="1" type="primary">rpsC</name>
    <name type="ordered locus">Hac_0142</name>
</gene>
<keyword id="KW-0687">Ribonucleoprotein</keyword>
<keyword id="KW-0689">Ribosomal protein</keyword>
<keyword id="KW-0694">RNA-binding</keyword>
<keyword id="KW-0699">rRNA-binding</keyword>
<protein>
    <recommendedName>
        <fullName evidence="1">Small ribosomal subunit protein uS3</fullName>
    </recommendedName>
    <alternativeName>
        <fullName evidence="2">30S ribosomal protein S3</fullName>
    </alternativeName>
</protein>
<feature type="chain" id="PRO_0000293802" description="Small ribosomal subunit protein uS3">
    <location>
        <begin position="1"/>
        <end position="234"/>
    </location>
</feature>
<feature type="domain" description="KH type-2" evidence="1">
    <location>
        <begin position="39"/>
        <end position="107"/>
    </location>
</feature>
<name>RS3_HELAH</name>
<comment type="function">
    <text evidence="1">Binds the lower part of the 30S subunit head. Binds mRNA in the 70S ribosome, positioning it for translation.</text>
</comment>
<comment type="subunit">
    <text evidence="1">Part of the 30S ribosomal subunit. Forms a tight complex with proteins S10 and S14.</text>
</comment>
<comment type="similarity">
    <text evidence="1">Belongs to the universal ribosomal protein uS3 family.</text>
</comment>
<reference key="1">
    <citation type="journal article" date="2006" name="PLoS Genet.">
        <title>Who ate whom? Adaptive Helicobacter genomic changes that accompanied a host jump from early humans to large felines.</title>
        <authorList>
            <person name="Eppinger M."/>
            <person name="Baar C."/>
            <person name="Linz B."/>
            <person name="Raddatz G."/>
            <person name="Lanz C."/>
            <person name="Keller H."/>
            <person name="Morelli G."/>
            <person name="Gressmann H."/>
            <person name="Achtman M."/>
            <person name="Schuster S.C."/>
        </authorList>
    </citation>
    <scope>NUCLEOTIDE SEQUENCE [LARGE SCALE GENOMIC DNA]</scope>
    <source>
        <strain>Sheeba</strain>
    </source>
</reference>
<dbReference type="EMBL" id="AM260522">
    <property type="protein sequence ID" value="CAJ98994.1"/>
    <property type="molecule type" value="Genomic_DNA"/>
</dbReference>
<dbReference type="RefSeq" id="WP_011577114.1">
    <property type="nucleotide sequence ID" value="NC_008229.1"/>
</dbReference>
<dbReference type="SMR" id="Q17ZD2"/>
<dbReference type="STRING" id="382638.Hac_0142"/>
<dbReference type="GeneID" id="31757671"/>
<dbReference type="KEGG" id="hac:Hac_0142"/>
<dbReference type="eggNOG" id="COG0092">
    <property type="taxonomic scope" value="Bacteria"/>
</dbReference>
<dbReference type="HOGENOM" id="CLU_058591_0_2_7"/>
<dbReference type="OrthoDB" id="9806396at2"/>
<dbReference type="BioCyc" id="HACI382638:HAC_RS00610-MONOMER"/>
<dbReference type="Proteomes" id="UP000000775">
    <property type="component" value="Chromosome"/>
</dbReference>
<dbReference type="GO" id="GO:0022627">
    <property type="term" value="C:cytosolic small ribosomal subunit"/>
    <property type="evidence" value="ECO:0007669"/>
    <property type="project" value="TreeGrafter"/>
</dbReference>
<dbReference type="GO" id="GO:0003729">
    <property type="term" value="F:mRNA binding"/>
    <property type="evidence" value="ECO:0007669"/>
    <property type="project" value="UniProtKB-UniRule"/>
</dbReference>
<dbReference type="GO" id="GO:0019843">
    <property type="term" value="F:rRNA binding"/>
    <property type="evidence" value="ECO:0007669"/>
    <property type="project" value="UniProtKB-UniRule"/>
</dbReference>
<dbReference type="GO" id="GO:0003735">
    <property type="term" value="F:structural constituent of ribosome"/>
    <property type="evidence" value="ECO:0007669"/>
    <property type="project" value="InterPro"/>
</dbReference>
<dbReference type="GO" id="GO:0006412">
    <property type="term" value="P:translation"/>
    <property type="evidence" value="ECO:0007669"/>
    <property type="project" value="UniProtKB-UniRule"/>
</dbReference>
<dbReference type="CDD" id="cd02412">
    <property type="entry name" value="KH-II_30S_S3"/>
    <property type="match status" value="1"/>
</dbReference>
<dbReference type="FunFam" id="3.30.1140.32:FF:000006">
    <property type="entry name" value="30S ribosomal protein S3"/>
    <property type="match status" value="1"/>
</dbReference>
<dbReference type="FunFam" id="3.30.300.20:FF:000001">
    <property type="entry name" value="30S ribosomal protein S3"/>
    <property type="match status" value="1"/>
</dbReference>
<dbReference type="Gene3D" id="3.30.300.20">
    <property type="match status" value="1"/>
</dbReference>
<dbReference type="Gene3D" id="3.30.1140.32">
    <property type="entry name" value="Ribosomal protein S3, C-terminal domain"/>
    <property type="match status" value="1"/>
</dbReference>
<dbReference type="HAMAP" id="MF_01309_B">
    <property type="entry name" value="Ribosomal_uS3_B"/>
    <property type="match status" value="1"/>
</dbReference>
<dbReference type="InterPro" id="IPR004087">
    <property type="entry name" value="KH_dom"/>
</dbReference>
<dbReference type="InterPro" id="IPR015946">
    <property type="entry name" value="KH_dom-like_a/b"/>
</dbReference>
<dbReference type="InterPro" id="IPR004044">
    <property type="entry name" value="KH_dom_type_2"/>
</dbReference>
<dbReference type="InterPro" id="IPR009019">
    <property type="entry name" value="KH_sf_prok-type"/>
</dbReference>
<dbReference type="InterPro" id="IPR036419">
    <property type="entry name" value="Ribosomal_S3_C_sf"/>
</dbReference>
<dbReference type="InterPro" id="IPR005704">
    <property type="entry name" value="Ribosomal_uS3_bac-typ"/>
</dbReference>
<dbReference type="InterPro" id="IPR001351">
    <property type="entry name" value="Ribosomal_uS3_C"/>
</dbReference>
<dbReference type="InterPro" id="IPR018280">
    <property type="entry name" value="Ribosomal_uS3_CS"/>
</dbReference>
<dbReference type="NCBIfam" id="TIGR01009">
    <property type="entry name" value="rpsC_bact"/>
    <property type="match status" value="1"/>
</dbReference>
<dbReference type="PANTHER" id="PTHR11760">
    <property type="entry name" value="30S/40S RIBOSOMAL PROTEIN S3"/>
    <property type="match status" value="1"/>
</dbReference>
<dbReference type="PANTHER" id="PTHR11760:SF19">
    <property type="entry name" value="SMALL RIBOSOMAL SUBUNIT PROTEIN US3C"/>
    <property type="match status" value="1"/>
</dbReference>
<dbReference type="Pfam" id="PF07650">
    <property type="entry name" value="KH_2"/>
    <property type="match status" value="1"/>
</dbReference>
<dbReference type="Pfam" id="PF00189">
    <property type="entry name" value="Ribosomal_S3_C"/>
    <property type="match status" value="1"/>
</dbReference>
<dbReference type="SMART" id="SM00322">
    <property type="entry name" value="KH"/>
    <property type="match status" value="1"/>
</dbReference>
<dbReference type="SUPFAM" id="SSF54814">
    <property type="entry name" value="Prokaryotic type KH domain (KH-domain type II)"/>
    <property type="match status" value="1"/>
</dbReference>
<dbReference type="SUPFAM" id="SSF54821">
    <property type="entry name" value="Ribosomal protein S3 C-terminal domain"/>
    <property type="match status" value="1"/>
</dbReference>
<dbReference type="PROSITE" id="PS50823">
    <property type="entry name" value="KH_TYPE_2"/>
    <property type="match status" value="1"/>
</dbReference>
<dbReference type="PROSITE" id="PS00548">
    <property type="entry name" value="RIBOSOMAL_S3"/>
    <property type="match status" value="1"/>
</dbReference>
<organism>
    <name type="scientific">Helicobacter acinonychis (strain Sheeba)</name>
    <dbReference type="NCBI Taxonomy" id="382638"/>
    <lineage>
        <taxon>Bacteria</taxon>
        <taxon>Pseudomonadati</taxon>
        <taxon>Campylobacterota</taxon>
        <taxon>Epsilonproteobacteria</taxon>
        <taxon>Campylobacterales</taxon>
        <taxon>Helicobacteraceae</taxon>
        <taxon>Helicobacter</taxon>
    </lineage>
</organism>